<organism>
    <name type="scientific">Cucumber green mottle mosaic virus (strain watermelon SH)</name>
    <name type="common">CGMMV</name>
    <dbReference type="NCBI Taxonomy" id="12236"/>
    <lineage>
        <taxon>Viruses</taxon>
        <taxon>Riboviria</taxon>
        <taxon>Orthornavirae</taxon>
        <taxon>Kitrinoviricota</taxon>
        <taxon>Alsuviricetes</taxon>
        <taxon>Martellivirales</taxon>
        <taxon>Virgaviridae</taxon>
        <taxon>Tobamovirus</taxon>
        <taxon>Cucumber green mottle mosaic virus</taxon>
    </lineage>
</organism>
<protein>
    <recommendedName>
        <fullName>Movement protein</fullName>
    </recommendedName>
    <alternativeName>
        <fullName>28.8 kDa protein</fullName>
    </alternativeName>
    <alternativeName>
        <fullName>Cell-to-cell transport protein</fullName>
    </alternativeName>
</protein>
<evidence type="ECO:0000250" key="1">
    <source>
        <dbReference type="UniProtKB" id="P03583"/>
    </source>
</evidence>
<evidence type="ECO:0000250" key="2">
    <source>
        <dbReference type="UniProtKB" id="P69513"/>
    </source>
</evidence>
<evidence type="ECO:0000256" key="3">
    <source>
        <dbReference type="SAM" id="MobiDB-lite"/>
    </source>
</evidence>
<evidence type="ECO:0000305" key="4"/>
<feature type="chain" id="PRO_0000144956" description="Movement protein">
    <location>
        <begin position="1"/>
        <end position="264"/>
    </location>
</feature>
<feature type="region of interest" description="Disordered" evidence="3">
    <location>
        <begin position="219"/>
        <end position="264"/>
    </location>
</feature>
<feature type="compositionally biased region" description="Basic residues" evidence="3">
    <location>
        <begin position="231"/>
        <end position="240"/>
    </location>
</feature>
<organismHost>
    <name type="scientific">Citrullus</name>
    <dbReference type="NCBI Taxonomy" id="3653"/>
</organismHost>
<organismHost>
    <name type="scientific">Cucumis sativus</name>
    <name type="common">Cucumber</name>
    <dbReference type="NCBI Taxonomy" id="3659"/>
</organismHost>
<organismHost>
    <name type="scientific">Lagenaria siceraria</name>
    <name type="common">Bottle gourd</name>
    <name type="synonym">Lagenaria leucantha</name>
    <dbReference type="NCBI Taxonomy" id="3668"/>
</organismHost>
<gene>
    <name type="primary">MP</name>
</gene>
<comment type="function">
    <text evidence="1 2">Transports viral genome to neighboring plant cells directly through plasmosdesmata, without any budding. The movement protein allows efficient cell to cell propagation, by bypassing the host cell wall barrier. Forms a ribonucleoprotein complex with viral RNA. Binds microtubules and modulates microtubule stability. Can bind double-stranded DNA.</text>
</comment>
<comment type="subcellular location">
    <subcellularLocation>
        <location evidence="2">Host cytoplasm</location>
        <location evidence="2">Host cytoskeleton</location>
    </subcellularLocation>
    <subcellularLocation>
        <location evidence="2">Host cell junction</location>
        <location evidence="2">Host plasmodesma</location>
    </subcellularLocation>
</comment>
<comment type="similarity">
    <text evidence="4">Belongs to the tobamovirus movement protein family.</text>
</comment>
<keyword id="KW-1031">Host cell junction</keyword>
<keyword id="KW-1035">Host cytoplasm</keyword>
<keyword id="KW-1037">Host cytoskeleton</keyword>
<keyword id="KW-1185">Reference proteome</keyword>
<keyword id="KW-0694">RNA-binding</keyword>
<keyword id="KW-0813">Transport</keyword>
<keyword id="KW-0916">Viral movement protein</keyword>
<proteinExistence type="inferred from homology"/>
<accession>P25034</accession>
<name>MVP_CGMVS</name>
<dbReference type="EMBL" id="D12505">
    <property type="protein sequence ID" value="BAA02070.1"/>
    <property type="molecule type" value="Genomic_RNA"/>
</dbReference>
<dbReference type="PIR" id="JQ1159">
    <property type="entry name" value="WMTMSH"/>
</dbReference>
<dbReference type="RefSeq" id="NP_044579.1">
    <property type="nucleotide sequence ID" value="NC_001801.1"/>
</dbReference>
<dbReference type="KEGG" id="vg:1494063"/>
<dbReference type="Proteomes" id="UP000008447">
    <property type="component" value="Segment"/>
</dbReference>
<dbReference type="GO" id="GO:0030430">
    <property type="term" value="C:host cell cytoplasm"/>
    <property type="evidence" value="ECO:0007669"/>
    <property type="project" value="UniProtKB-KW"/>
</dbReference>
<dbReference type="GO" id="GO:0044219">
    <property type="term" value="C:host cell plasmodesma"/>
    <property type="evidence" value="ECO:0007669"/>
    <property type="project" value="UniProtKB-SubCell"/>
</dbReference>
<dbReference type="GO" id="GO:0044163">
    <property type="term" value="C:host cytoskeleton"/>
    <property type="evidence" value="ECO:0007669"/>
    <property type="project" value="UniProtKB-SubCell"/>
</dbReference>
<dbReference type="GO" id="GO:0003723">
    <property type="term" value="F:RNA binding"/>
    <property type="evidence" value="ECO:0007669"/>
    <property type="project" value="UniProtKB-KW"/>
</dbReference>
<dbReference type="GO" id="GO:0046740">
    <property type="term" value="P:transport of virus in host, cell to cell"/>
    <property type="evidence" value="ECO:0007669"/>
    <property type="project" value="UniProtKB-KW"/>
</dbReference>
<dbReference type="InterPro" id="IPR001022">
    <property type="entry name" value="TMV_movement"/>
</dbReference>
<dbReference type="InterPro" id="IPR028919">
    <property type="entry name" value="Viral_movement"/>
</dbReference>
<dbReference type="Pfam" id="PF01107">
    <property type="entry name" value="MP"/>
    <property type="match status" value="1"/>
</dbReference>
<dbReference type="PRINTS" id="PR00964">
    <property type="entry name" value="MOVEMENT"/>
</dbReference>
<reference key="1">
    <citation type="journal article" date="1991" name="J. Gen. Virol.">
        <title>The complete nucleotide sequence of cucumber green mottle mosaic virus (SH strain) genomic RNA.</title>
        <authorList>
            <person name="Ugaki M."/>
            <person name="Tomiyama M."/>
            <person name="Kakutani T."/>
            <person name="Hidaka S."/>
            <person name="Kiguchi T."/>
            <person name="Nagata R."/>
            <person name="Sato T."/>
            <person name="Motoyoshi F."/>
            <person name="Nishiguchi M."/>
        </authorList>
    </citation>
    <scope>NUCLEOTIDE SEQUENCE [GENOMIC RNA]</scope>
</reference>
<sequence length="264" mass="28875">MSLSKVSVENSLKPEKFVKISWVDKLLPNYFSILKYLSITDFSVVKAQSYESLVPVKLLRGVDLTKHLYVTLLGVVVSGVWNVPESCRGGATVALVDTRMHSVAEGTICKFSAPATVREFSVRFIPNYPVVAADALRDPWSLFVRLSNVGIKDGFHPLTLEVACLVATTNSIIKKGLRASVVESVVSSDQSIVLDSLSEKVEPFFDKVPISAAVMARDPSYRSRSQSVGGRGKRHSKPPNRRLDSASEESSSVSFEDGLQSDHT</sequence>